<organism>
    <name type="scientific">Aeromonas salmonicida (strain A449)</name>
    <dbReference type="NCBI Taxonomy" id="382245"/>
    <lineage>
        <taxon>Bacteria</taxon>
        <taxon>Pseudomonadati</taxon>
        <taxon>Pseudomonadota</taxon>
        <taxon>Gammaproteobacteria</taxon>
        <taxon>Aeromonadales</taxon>
        <taxon>Aeromonadaceae</taxon>
        <taxon>Aeromonas</taxon>
    </lineage>
</organism>
<reference key="1">
    <citation type="journal article" date="2008" name="BMC Genomics">
        <title>The genome of Aeromonas salmonicida subsp. salmonicida A449: insights into the evolution of a fish pathogen.</title>
        <authorList>
            <person name="Reith M.E."/>
            <person name="Singh R.K."/>
            <person name="Curtis B."/>
            <person name="Boyd J.M."/>
            <person name="Bouevitch A."/>
            <person name="Kimball J."/>
            <person name="Munholland J."/>
            <person name="Murphy C."/>
            <person name="Sarty D."/>
            <person name="Williams J."/>
            <person name="Nash J.H."/>
            <person name="Johnson S.C."/>
            <person name="Brown L.L."/>
        </authorList>
    </citation>
    <scope>NUCLEOTIDE SEQUENCE [LARGE SCALE GENOMIC DNA]</scope>
    <source>
        <strain>A449</strain>
    </source>
</reference>
<feature type="chain" id="PRO_1000049208" description="Small ribosomal subunit protein bS16">
    <location>
        <begin position="1"/>
        <end position="82"/>
    </location>
</feature>
<accession>A4SIV7</accession>
<dbReference type="EMBL" id="CP000644">
    <property type="protein sequence ID" value="ABO88829.1"/>
    <property type="molecule type" value="Genomic_DNA"/>
</dbReference>
<dbReference type="RefSeq" id="WP_005313512.1">
    <property type="nucleotide sequence ID" value="NC_009348.1"/>
</dbReference>
<dbReference type="SMR" id="A4SIV7"/>
<dbReference type="STRING" id="29491.GCA_000820065_01827"/>
<dbReference type="KEGG" id="asa:ASA_0666"/>
<dbReference type="eggNOG" id="COG0228">
    <property type="taxonomic scope" value="Bacteria"/>
</dbReference>
<dbReference type="HOGENOM" id="CLU_100590_5_1_6"/>
<dbReference type="Proteomes" id="UP000000225">
    <property type="component" value="Chromosome"/>
</dbReference>
<dbReference type="GO" id="GO:0005737">
    <property type="term" value="C:cytoplasm"/>
    <property type="evidence" value="ECO:0007669"/>
    <property type="project" value="UniProtKB-ARBA"/>
</dbReference>
<dbReference type="GO" id="GO:0015935">
    <property type="term" value="C:small ribosomal subunit"/>
    <property type="evidence" value="ECO:0007669"/>
    <property type="project" value="TreeGrafter"/>
</dbReference>
<dbReference type="GO" id="GO:0003735">
    <property type="term" value="F:structural constituent of ribosome"/>
    <property type="evidence" value="ECO:0007669"/>
    <property type="project" value="InterPro"/>
</dbReference>
<dbReference type="GO" id="GO:0006412">
    <property type="term" value="P:translation"/>
    <property type="evidence" value="ECO:0007669"/>
    <property type="project" value="UniProtKB-UniRule"/>
</dbReference>
<dbReference type="FunFam" id="3.30.1320.10:FF:000001">
    <property type="entry name" value="30S ribosomal protein S16"/>
    <property type="match status" value="1"/>
</dbReference>
<dbReference type="Gene3D" id="3.30.1320.10">
    <property type="match status" value="1"/>
</dbReference>
<dbReference type="HAMAP" id="MF_00385">
    <property type="entry name" value="Ribosomal_bS16"/>
    <property type="match status" value="1"/>
</dbReference>
<dbReference type="InterPro" id="IPR000307">
    <property type="entry name" value="Ribosomal_bS16"/>
</dbReference>
<dbReference type="InterPro" id="IPR023803">
    <property type="entry name" value="Ribosomal_bS16_dom_sf"/>
</dbReference>
<dbReference type="NCBIfam" id="TIGR00002">
    <property type="entry name" value="S16"/>
    <property type="match status" value="1"/>
</dbReference>
<dbReference type="PANTHER" id="PTHR12919">
    <property type="entry name" value="30S RIBOSOMAL PROTEIN S16"/>
    <property type="match status" value="1"/>
</dbReference>
<dbReference type="PANTHER" id="PTHR12919:SF20">
    <property type="entry name" value="SMALL RIBOSOMAL SUBUNIT PROTEIN BS16M"/>
    <property type="match status" value="1"/>
</dbReference>
<dbReference type="Pfam" id="PF00886">
    <property type="entry name" value="Ribosomal_S16"/>
    <property type="match status" value="1"/>
</dbReference>
<dbReference type="SUPFAM" id="SSF54565">
    <property type="entry name" value="Ribosomal protein S16"/>
    <property type="match status" value="1"/>
</dbReference>
<proteinExistence type="inferred from homology"/>
<protein>
    <recommendedName>
        <fullName evidence="1">Small ribosomal subunit protein bS16</fullName>
    </recommendedName>
    <alternativeName>
        <fullName evidence="2">30S ribosomal protein S16</fullName>
    </alternativeName>
</protein>
<sequence length="82" mass="8961">MVTIRLQRGGAKKRPFYQVVVSDSRCARDGRFIERVGFFNPVASGSAETLNLDLARIEHWVATGAAVSDRVAKLIKDATKAA</sequence>
<name>RS16_AERS4</name>
<gene>
    <name evidence="1" type="primary">rpsP</name>
    <name type="ordered locus">ASA_0666</name>
</gene>
<evidence type="ECO:0000255" key="1">
    <source>
        <dbReference type="HAMAP-Rule" id="MF_00385"/>
    </source>
</evidence>
<evidence type="ECO:0000305" key="2"/>
<comment type="similarity">
    <text evidence="1">Belongs to the bacterial ribosomal protein bS16 family.</text>
</comment>
<keyword id="KW-0687">Ribonucleoprotein</keyword>
<keyword id="KW-0689">Ribosomal protein</keyword>